<dbReference type="EMBL" id="AY305863">
    <property type="protein sequence ID" value="AAP74355.1"/>
    <property type="status" value="ALT_SEQ"/>
    <property type="molecule type" value="mRNA"/>
</dbReference>
<dbReference type="EMBL" id="AP005301">
    <property type="protein sequence ID" value="BAC24961.1"/>
    <property type="molecule type" value="Genomic_DNA"/>
</dbReference>
<dbReference type="EMBL" id="AP008214">
    <property type="protein sequence ID" value="BAF23740.1"/>
    <property type="status" value="ALT_SEQ"/>
    <property type="molecule type" value="Genomic_DNA"/>
</dbReference>
<dbReference type="EMBL" id="AP014964">
    <property type="status" value="NOT_ANNOTATED_CDS"/>
    <property type="molecule type" value="Genomic_DNA"/>
</dbReference>
<dbReference type="RefSeq" id="XP_015650558.1">
    <property type="nucleotide sequence ID" value="XM_015795072.1"/>
</dbReference>
<dbReference type="SMR" id="Q8H329"/>
<dbReference type="FunCoup" id="Q8H329">
    <property type="interactions" value="1496"/>
</dbReference>
<dbReference type="STRING" id="39947.Q8H329"/>
<dbReference type="PaxDb" id="39947-Q8H329"/>
<dbReference type="KEGG" id="dosa:Os08g0422200"/>
<dbReference type="eggNOG" id="KOG1484">
    <property type="taxonomic scope" value="Eukaryota"/>
</dbReference>
<dbReference type="InParanoid" id="Q8H329"/>
<dbReference type="OrthoDB" id="78669at2759"/>
<dbReference type="Proteomes" id="UP000000763">
    <property type="component" value="Chromosome 8"/>
</dbReference>
<dbReference type="Proteomes" id="UP000059680">
    <property type="component" value="Chromosome 8"/>
</dbReference>
<dbReference type="GO" id="GO:0005794">
    <property type="term" value="C:Golgi apparatus"/>
    <property type="evidence" value="ECO:0000318"/>
    <property type="project" value="GO_Central"/>
</dbReference>
<dbReference type="GO" id="GO:0005774">
    <property type="term" value="C:vacuolar membrane"/>
    <property type="evidence" value="ECO:0007669"/>
    <property type="project" value="UniProtKB-SubCell"/>
</dbReference>
<dbReference type="GO" id="GO:0046873">
    <property type="term" value="F:metal ion transmembrane transporter activity"/>
    <property type="evidence" value="ECO:0000318"/>
    <property type="project" value="GO_Central"/>
</dbReference>
<dbReference type="GO" id="GO:0005385">
    <property type="term" value="F:zinc ion transmembrane transporter activity"/>
    <property type="evidence" value="ECO:0007669"/>
    <property type="project" value="InterPro"/>
</dbReference>
<dbReference type="GO" id="GO:0006882">
    <property type="term" value="P:intracellular zinc ion homeostasis"/>
    <property type="evidence" value="ECO:0007669"/>
    <property type="project" value="InterPro"/>
</dbReference>
<dbReference type="GO" id="GO:0030001">
    <property type="term" value="P:metal ion transport"/>
    <property type="evidence" value="ECO:0000318"/>
    <property type="project" value="GO_Central"/>
</dbReference>
<dbReference type="FunFam" id="1.20.1510.10:FF:000022">
    <property type="entry name" value="Cation transporter, putative"/>
    <property type="match status" value="1"/>
</dbReference>
<dbReference type="Gene3D" id="1.20.1510.10">
    <property type="entry name" value="Cation efflux protein transmembrane domain"/>
    <property type="match status" value="1"/>
</dbReference>
<dbReference type="InterPro" id="IPR002524">
    <property type="entry name" value="Cation_efflux"/>
</dbReference>
<dbReference type="InterPro" id="IPR036837">
    <property type="entry name" value="Cation_efflux_CTD_sf"/>
</dbReference>
<dbReference type="InterPro" id="IPR027469">
    <property type="entry name" value="Cation_efflux_TMD_sf"/>
</dbReference>
<dbReference type="InterPro" id="IPR045316">
    <property type="entry name" value="Msc2-like"/>
</dbReference>
<dbReference type="NCBIfam" id="TIGR01297">
    <property type="entry name" value="CDF"/>
    <property type="match status" value="1"/>
</dbReference>
<dbReference type="PANTHER" id="PTHR45755">
    <property type="match status" value="1"/>
</dbReference>
<dbReference type="PANTHER" id="PTHR45755:SF4">
    <property type="entry name" value="ZINC TRANSPORTER 7"/>
    <property type="match status" value="1"/>
</dbReference>
<dbReference type="Pfam" id="PF01545">
    <property type="entry name" value="Cation_efflux"/>
    <property type="match status" value="1"/>
</dbReference>
<dbReference type="SUPFAM" id="SSF160240">
    <property type="entry name" value="Cation efflux protein cytoplasmic domain-like"/>
    <property type="match status" value="1"/>
</dbReference>
<dbReference type="SUPFAM" id="SSF161111">
    <property type="entry name" value="Cation efflux protein transmembrane domain-like"/>
    <property type="match status" value="1"/>
</dbReference>
<name>MTP8_ORYSJ</name>
<gene>
    <name type="primary">MTP8</name>
    <name type="ordered locus">Os08g0422200</name>
    <name type="ordered locus">LOC_Os08g32650</name>
    <name type="ORF">OSJNBa0077M12.119</name>
</gene>
<organism>
    <name type="scientific">Oryza sativa subsp. japonica</name>
    <name type="common">Rice</name>
    <dbReference type="NCBI Taxonomy" id="39947"/>
    <lineage>
        <taxon>Eukaryota</taxon>
        <taxon>Viridiplantae</taxon>
        <taxon>Streptophyta</taxon>
        <taxon>Embryophyta</taxon>
        <taxon>Tracheophyta</taxon>
        <taxon>Spermatophyta</taxon>
        <taxon>Magnoliopsida</taxon>
        <taxon>Liliopsida</taxon>
        <taxon>Poales</taxon>
        <taxon>Poaceae</taxon>
        <taxon>BOP clade</taxon>
        <taxon>Oryzoideae</taxon>
        <taxon>Oryzeae</taxon>
        <taxon>Oryzinae</taxon>
        <taxon>Oryza</taxon>
        <taxon>Oryza sativa</taxon>
    </lineage>
</organism>
<evidence type="ECO:0000250" key="1"/>
<evidence type="ECO:0000255" key="2"/>
<evidence type="ECO:0000256" key="3">
    <source>
        <dbReference type="SAM" id="MobiDB-lite"/>
    </source>
</evidence>
<evidence type="ECO:0000305" key="4"/>
<accession>Q8H329</accession>
<accession>Q7XZF0</accession>
<proteinExistence type="evidence at transcript level"/>
<sequence length="316" mass="35039">MGPVRHILNERKSRKIAAFLLINTAYMFVEFTSGFMSDSLGLISDACHMLFDCAALAIGLYASYIARLPANGLYNYGRGRFEVLSGYVNAVFLVLVGALIVLESFERILEPREISTSSLLTVSIGGLVVNVIGLVFFHEEHHHAHGEAHSCNGGLQSSENHNKSRNRHHIDHNMEGIFLHVLADTMGSVGVVISTLLIKYKGWLIADPICSVFISIMIVSSVLPLLRNSAEILLQRVPRSLEKDIKEALDDVMKIKGVIGVHNFHVWNLTNTDIVGTFHLHITTEADKSSIREKASDIFHEAGIQDLTIQIECVKR</sequence>
<feature type="chain" id="PRO_0000400016" description="Metal tolerance protein 8">
    <location>
        <begin position="1"/>
        <end position="316"/>
    </location>
</feature>
<feature type="topological domain" description="Cytoplasmic" evidence="2">
    <location>
        <begin position="1"/>
        <end position="15"/>
    </location>
</feature>
<feature type="transmembrane region" description="Helical" evidence="2">
    <location>
        <begin position="16"/>
        <end position="36"/>
    </location>
</feature>
<feature type="topological domain" description="Vacuolar" evidence="2">
    <location>
        <begin position="37"/>
        <end position="45"/>
    </location>
</feature>
<feature type="transmembrane region" description="Helical" evidence="2">
    <location>
        <begin position="46"/>
        <end position="66"/>
    </location>
</feature>
<feature type="topological domain" description="Cytoplasmic" evidence="2">
    <location>
        <begin position="67"/>
        <end position="80"/>
    </location>
</feature>
<feature type="transmembrane region" description="Helical" evidence="2">
    <location>
        <begin position="81"/>
        <end position="101"/>
    </location>
</feature>
<feature type="topological domain" description="Vacuolar" evidence="2">
    <location>
        <begin position="102"/>
        <end position="116"/>
    </location>
</feature>
<feature type="transmembrane region" description="Helical" evidence="2">
    <location>
        <begin position="117"/>
        <end position="137"/>
    </location>
</feature>
<feature type="topological domain" description="Cytoplasmic" evidence="2">
    <location>
        <begin position="138"/>
        <end position="176"/>
    </location>
</feature>
<feature type="transmembrane region" description="Helical" evidence="2">
    <location>
        <begin position="177"/>
        <end position="197"/>
    </location>
</feature>
<feature type="topological domain" description="Vacuolar" evidence="2">
    <location>
        <begin position="198"/>
        <end position="202"/>
    </location>
</feature>
<feature type="transmembrane region" description="Helical" evidence="2">
    <location>
        <begin position="203"/>
        <end position="223"/>
    </location>
</feature>
<feature type="topological domain" description="Cytoplasmic" evidence="2">
    <location>
        <begin position="224"/>
        <end position="316"/>
    </location>
</feature>
<feature type="region of interest" description="Disordered" evidence="3">
    <location>
        <begin position="147"/>
        <end position="166"/>
    </location>
</feature>
<comment type="function">
    <text evidence="1">Involved in sequestration of excess metal in the cytoplasm into vacuoles to maintain metal homeostasis.</text>
</comment>
<comment type="subcellular location">
    <subcellularLocation>
        <location evidence="1">Vacuole membrane</location>
        <topology evidence="1">Multi-pass membrane protein</topology>
    </subcellularLocation>
    <text>Tonoplast.</text>
</comment>
<comment type="similarity">
    <text evidence="4">Belongs to the cation diffusion facilitator (CDF) transporter (TC 2.A.4) family. SLC30A subfamily.</text>
</comment>
<comment type="sequence caution" evidence="4">
    <conflict type="miscellaneous discrepancy">
        <sequence resource="EMBL-CDS" id="AAP74355"/>
    </conflict>
    <text>Intron retention.</text>
</comment>
<comment type="sequence caution" evidence="4">
    <conflict type="erroneous gene model prediction">
        <sequence resource="EMBL-CDS" id="BAF23740"/>
    </conflict>
</comment>
<keyword id="KW-0406">Ion transport</keyword>
<keyword id="KW-0472">Membrane</keyword>
<keyword id="KW-1185">Reference proteome</keyword>
<keyword id="KW-0812">Transmembrane</keyword>
<keyword id="KW-1133">Transmembrane helix</keyword>
<keyword id="KW-0813">Transport</keyword>
<keyword id="KW-0926">Vacuole</keyword>
<protein>
    <recommendedName>
        <fullName>Metal tolerance protein 8</fullName>
        <shortName>OsMTP8</shortName>
    </recommendedName>
</protein>
<reference key="1">
    <citation type="submission" date="2003-05" db="EMBL/GenBank/DDBJ databases">
        <title>Molecular cloning and characterization of a cDNA encoding cation transporter from rice.</title>
        <authorList>
            <person name="Huang J."/>
            <person name="Jiang Y."/>
            <person name="Zhang H.-S."/>
        </authorList>
    </citation>
    <scope>NUCLEOTIDE SEQUENCE [MRNA]</scope>
    <source>
        <strain>cv. Jiu Caiqing</strain>
        <tissue>Root</tissue>
    </source>
</reference>
<reference key="2">
    <citation type="journal article" date="2005" name="Nature">
        <title>The map-based sequence of the rice genome.</title>
        <authorList>
            <consortium name="International rice genome sequencing project (IRGSP)"/>
        </authorList>
    </citation>
    <scope>NUCLEOTIDE SEQUENCE [LARGE SCALE GENOMIC DNA]</scope>
    <source>
        <strain>cv. Nipponbare</strain>
    </source>
</reference>
<reference key="3">
    <citation type="journal article" date="2008" name="Nucleic Acids Res.">
        <title>The rice annotation project database (RAP-DB): 2008 update.</title>
        <authorList>
            <consortium name="The rice annotation project (RAP)"/>
        </authorList>
    </citation>
    <scope>GENOME REANNOTATION</scope>
    <source>
        <strain>cv. Nipponbare</strain>
    </source>
</reference>
<reference key="4">
    <citation type="journal article" date="2013" name="Rice">
        <title>Improvement of the Oryza sativa Nipponbare reference genome using next generation sequence and optical map data.</title>
        <authorList>
            <person name="Kawahara Y."/>
            <person name="de la Bastide M."/>
            <person name="Hamilton J.P."/>
            <person name="Kanamori H."/>
            <person name="McCombie W.R."/>
            <person name="Ouyang S."/>
            <person name="Schwartz D.C."/>
            <person name="Tanaka T."/>
            <person name="Wu J."/>
            <person name="Zhou S."/>
            <person name="Childs K.L."/>
            <person name="Davidson R.M."/>
            <person name="Lin H."/>
            <person name="Quesada-Ocampo L."/>
            <person name="Vaillancourt B."/>
            <person name="Sakai H."/>
            <person name="Lee S.S."/>
            <person name="Kim J."/>
            <person name="Numa H."/>
            <person name="Itoh T."/>
            <person name="Buell C.R."/>
            <person name="Matsumoto T."/>
        </authorList>
    </citation>
    <scope>GENOME REANNOTATION</scope>
    <source>
        <strain>cv. Nipponbare</strain>
    </source>
</reference>